<organismHost>
    <name type="scientific">Gallus gallus</name>
    <name type="common">Chicken</name>
    <dbReference type="NCBI Taxonomy" id="9031"/>
</organismHost>
<organism>
    <name type="scientific">Gallid herpesvirus 2 (strain Chicken/Md5/ATCC VR-987)</name>
    <name type="common">GaHV-2</name>
    <name type="synonym">Marek's disease herpesvirus type 1</name>
    <dbReference type="NCBI Taxonomy" id="10389"/>
    <lineage>
        <taxon>Viruses</taxon>
        <taxon>Duplodnaviria</taxon>
        <taxon>Heunggongvirae</taxon>
        <taxon>Peploviricota</taxon>
        <taxon>Herviviricetes</taxon>
        <taxon>Herpesvirales</taxon>
        <taxon>Orthoherpesviridae</taxon>
        <taxon>Alphaherpesvirinae</taxon>
        <taxon>Mardivirus</taxon>
        <taxon>Mardivirus gallidalpha2</taxon>
        <taxon>Gallid alphaherpesvirus 2</taxon>
    </lineage>
</organism>
<keyword id="KW-1185">Reference proteome</keyword>
<proteinExistence type="predicted"/>
<gene>
    <name type="primary">MDV097</name>
</gene>
<reference key="1">
    <citation type="journal article" date="2000" name="J. Virol.">
        <title>The genome of a very virulent Marek's disease virus.</title>
        <authorList>
            <person name="Tulman E.R."/>
            <person name="Afonso C.L."/>
            <person name="Lu Z."/>
            <person name="Zsak L."/>
            <person name="Rock D.L."/>
            <person name="Kutish G.F."/>
        </authorList>
    </citation>
    <scope>NUCLEOTIDE SEQUENCE [LARGE SCALE GENOMIC DNA]</scope>
</reference>
<name>VG97_GAHVM</name>
<accession>Q9E6L4</accession>
<evidence type="ECO:0000256" key="1">
    <source>
        <dbReference type="SAM" id="MobiDB-lite"/>
    </source>
</evidence>
<protein>
    <recommendedName>
        <fullName>Uncharacterized gene 97 protein</fullName>
    </recommendedName>
</protein>
<feature type="chain" id="PRO_0000406540" description="Uncharacterized gene 97 protein">
    <location>
        <begin position="1"/>
        <end position="149"/>
    </location>
</feature>
<feature type="region of interest" description="Disordered" evidence="1">
    <location>
        <begin position="1"/>
        <end position="32"/>
    </location>
</feature>
<feature type="compositionally biased region" description="Basic and acidic residues" evidence="1">
    <location>
        <begin position="1"/>
        <end position="15"/>
    </location>
</feature>
<sequence length="149" mass="16689">MQRQTGHMEDKKRTGLESQGTENAFSDGRDGKDGLLHEGINEPILIPSTIADLEGIRELVRKFRGRLLPFEKCPDFCLRIGGLEASFHKGQEELLEYCEALYLPQPVKMEIVGIVDDVPGGENLPCSIAVDTIKSRHHGSLLTFFSHYH</sequence>
<dbReference type="EMBL" id="AF243438">
    <property type="protein sequence ID" value="AAG14271.1"/>
    <property type="molecule type" value="Genomic_DNA"/>
</dbReference>
<dbReference type="RefSeq" id="YP_001034014.1">
    <property type="nucleotide sequence ID" value="NC_002229.3"/>
</dbReference>
<dbReference type="GeneID" id="4811456"/>
<dbReference type="KEGG" id="vg:4811456"/>
<dbReference type="Proteomes" id="UP000008072">
    <property type="component" value="Segment"/>
</dbReference>
<dbReference type="InterPro" id="IPR003360">
    <property type="entry name" value="US22-like"/>
</dbReference>
<dbReference type="Pfam" id="PF02393">
    <property type="entry name" value="US22"/>
    <property type="match status" value="1"/>
</dbReference>